<evidence type="ECO:0000255" key="1"/>
<evidence type="ECO:0000255" key="2">
    <source>
        <dbReference type="PROSITE-ProRule" id="PRU00498"/>
    </source>
</evidence>
<evidence type="ECO:0000255" key="3">
    <source>
        <dbReference type="PROSITE-ProRule" id="PRU01103"/>
    </source>
</evidence>
<evidence type="ECO:0000269" key="4">
    <source>
    </source>
</evidence>
<evidence type="ECO:0000269" key="5">
    <source>
    </source>
</evidence>
<evidence type="ECO:0000303" key="6">
    <source>
    </source>
</evidence>
<evidence type="ECO:0000305" key="7"/>
<evidence type="ECO:0000305" key="8">
    <source>
    </source>
</evidence>
<evidence type="ECO:0000312" key="9">
    <source>
        <dbReference type="EMBL" id="KRH67173.1"/>
    </source>
</evidence>
<accession>I1JNS6</accession>
<feature type="signal peptide" evidence="1">
    <location>
        <begin position="1"/>
        <end position="25"/>
    </location>
</feature>
<feature type="chain" id="PRO_5014577186" description="Probable aspartic proteinase GIP1">
    <location>
        <begin position="26"/>
        <end position="427"/>
    </location>
</feature>
<feature type="domain" description="Peptidase A1" evidence="3">
    <location>
        <begin position="41"/>
        <end position="404"/>
    </location>
</feature>
<feature type="glycosylation site" description="N-linked (GlcNAc...) asparagine" evidence="2">
    <location>
        <position position="99"/>
    </location>
</feature>
<feature type="glycosylation site" description="N-linked (GlcNAc...) asparagine" evidence="2">
    <location>
        <position position="169"/>
    </location>
</feature>
<feature type="glycosylation site" description="N-linked (GlcNAc...) asparagine" evidence="2">
    <location>
        <position position="245"/>
    </location>
</feature>
<feature type="glycosylation site" description="N-linked (GlcNAc...) asparagine" evidence="2">
    <location>
        <position position="259"/>
    </location>
</feature>
<feature type="glycosylation site" description="N-linked (GlcNAc...) asparagine" evidence="2">
    <location>
        <position position="298"/>
    </location>
</feature>
<feature type="glycosylation site" description="N-linked (GlcNAc...) asparagine" evidence="2">
    <location>
        <position position="304"/>
    </location>
</feature>
<feature type="mutagenesis site" description="Almost abolishes the interaction with XEG1; when associated with A-409; A-411; A-413; A-415 and A-416." evidence="5">
    <original>L</original>
    <variation>A</variation>
    <location>
        <position position="408"/>
    </location>
</feature>
<feature type="mutagenesis site" description="Almost abolishes the interaction with XEG1; when associated with A-408; A-411; A-413; A-415 and A-416." evidence="5">
    <original>L</original>
    <variation>A</variation>
    <location>
        <position position="409"/>
    </location>
</feature>
<feature type="mutagenesis site" description="Almost abolishes the interaction with XEG1; when associated with A-408; A-409; A-413; A-415 and A-416." evidence="5">
    <original>D</original>
    <variation>A</variation>
    <location>
        <position position="411"/>
    </location>
</feature>
<feature type="mutagenesis site" description="Almost abolishes the interaction with XEG1; when associated with A-408; A-409; A-411; A-415 and A-416." evidence="5">
    <original>K</original>
    <variation>A</variation>
    <location>
        <position position="413"/>
    </location>
</feature>
<feature type="mutagenesis site" description="Almost abolishes the interaction with XEG1; when associated with A-408; A-409; A-411; A-413 and A-416." evidence="5">
    <original>S</original>
    <variation>A</variation>
    <location>
        <position position="415"/>
    </location>
</feature>
<feature type="mutagenesis site" description="Almost abolishes the interaction with XEG1; when associated with A-408; A-409; A-411; A-413 and A-415." evidence="5">
    <original>N</original>
    <variation>A</variation>
    <location>
        <position position="416"/>
    </location>
</feature>
<reference key="1">
    <citation type="journal article" date="2010" name="Nature">
        <title>Genome sequence of the palaeopolyploid soybean.</title>
        <authorList>
            <person name="Schmutz J."/>
            <person name="Cannon S.B."/>
            <person name="Schlueter J."/>
            <person name="Ma J."/>
            <person name="Mitros T."/>
            <person name="Nelson W."/>
            <person name="Hyten D.L."/>
            <person name="Song Q."/>
            <person name="Thelen J.J."/>
            <person name="Cheng J."/>
            <person name="Xu D."/>
            <person name="Hellsten U."/>
            <person name="May G.D."/>
            <person name="Yu Y."/>
            <person name="Sakurai T."/>
            <person name="Umezawa T."/>
            <person name="Bhattacharyya M.K."/>
            <person name="Sandhu D."/>
            <person name="Valliyodan B."/>
            <person name="Lindquist E."/>
            <person name="Peto M."/>
            <person name="Grant D."/>
            <person name="Shu S."/>
            <person name="Goodstein D."/>
            <person name="Barry K."/>
            <person name="Futrell-Griggs M."/>
            <person name="Abernathy B."/>
            <person name="Du J."/>
            <person name="Tian Z."/>
            <person name="Zhu L."/>
            <person name="Gill N."/>
            <person name="Joshi T."/>
            <person name="Libault M."/>
            <person name="Sethuraman A."/>
            <person name="Zhang X.-C."/>
            <person name="Shinozaki K."/>
            <person name="Nguyen H.T."/>
            <person name="Wing R.A."/>
            <person name="Cregan P."/>
            <person name="Specht J."/>
            <person name="Grimwood J."/>
            <person name="Rokhsar D."/>
            <person name="Stacey G."/>
            <person name="Shoemaker R.C."/>
            <person name="Jackson S.A."/>
        </authorList>
    </citation>
    <scope>NUCLEOTIDE SEQUENCE [LARGE SCALE GENOMIC DNA]</scope>
    <source>
        <strain>cv. Williams 82</strain>
    </source>
</reference>
<reference key="2">
    <citation type="journal article" date="2015" name="Plant Cell">
        <title>A Phytophthora sojae glycoside hydrolase 12 protein is a major virulence factor during soybean infection and is recognized as a PAMP.</title>
        <authorList>
            <person name="Ma Z."/>
            <person name="Song T."/>
            <person name="Zhu L."/>
            <person name="Ye W."/>
            <person name="Wang Y."/>
            <person name="Shao Y."/>
            <person name="Dong S."/>
            <person name="Zhang Z."/>
            <person name="Dou D."/>
            <person name="Zheng X."/>
            <person name="Tyler B.M."/>
            <person name="Wang Y."/>
        </authorList>
    </citation>
    <scope>FUNCTION</scope>
</reference>
<reference key="3">
    <citation type="journal article" date="2017" name="Science">
        <title>A paralogous decoy protects Phytophthora sojae apoplastic effector PsXEG1 from a host inhibitor.</title>
        <authorList>
            <person name="Ma Z."/>
            <person name="Zhu L."/>
            <person name="Song T."/>
            <person name="Wang Y."/>
            <person name="Zhang Q."/>
            <person name="Xia Y."/>
            <person name="Qiu M."/>
            <person name="Lin Y."/>
            <person name="Li H."/>
            <person name="Kong L."/>
            <person name="Fang Y."/>
            <person name="Ye W."/>
            <person name="Wang Y."/>
            <person name="Dong S."/>
            <person name="Zheng X."/>
            <person name="Tyler B.M."/>
            <person name="Wang Y."/>
        </authorList>
    </citation>
    <scope>FUNCTION</scope>
    <scope>INTERACTION WITH PHYTOPHTORA SOJAE XYLOGLUCANASE XEG1 AND XLP1</scope>
    <scope>SUBCELLULAR LOCATION</scope>
    <scope>MUTAGENESIS OF LEU-408; LEU-409; ASP-411; LYS-413; SER-415 AND ASN-416</scope>
</reference>
<organism>
    <name type="scientific">Glycine max</name>
    <name type="common">Soybean</name>
    <name type="synonym">Glycine hispida</name>
    <dbReference type="NCBI Taxonomy" id="3847"/>
    <lineage>
        <taxon>Eukaryota</taxon>
        <taxon>Viridiplantae</taxon>
        <taxon>Streptophyta</taxon>
        <taxon>Embryophyta</taxon>
        <taxon>Tracheophyta</taxon>
        <taxon>Spermatophyta</taxon>
        <taxon>Magnoliopsida</taxon>
        <taxon>eudicotyledons</taxon>
        <taxon>Gunneridae</taxon>
        <taxon>Pentapetalae</taxon>
        <taxon>rosids</taxon>
        <taxon>fabids</taxon>
        <taxon>Fabales</taxon>
        <taxon>Fabaceae</taxon>
        <taxon>Papilionoideae</taxon>
        <taxon>50 kb inversion clade</taxon>
        <taxon>NPAAA clade</taxon>
        <taxon>indigoferoid/millettioid clade</taxon>
        <taxon>Phaseoleae</taxon>
        <taxon>Glycine</taxon>
        <taxon>Glycine subgen. Soja</taxon>
    </lineage>
</organism>
<gene>
    <name evidence="6" type="primary">GIP1</name>
    <name evidence="9" type="ORF">GLYMA_03G151900</name>
</gene>
<proteinExistence type="evidence at protein level"/>
<comment type="function">
    <text evidence="4 5">Involved in plant defense against Phytophtora sojae (PubMed:28082413). Contributes positively to soybean resistance against P.sojae (PubMed:28082413). Binds the P.sojae xyloglucanase XEG1 and inhibits its cell wall degrading enzyme activity and its contribution as P.sojae virulence factor (PubMed:28082413). XEG1 acts as an important virulence factor during P.sojae infection but also acts as a pathogen-associated molecular pattern (PAMP) in soybean and solanaceous species, where it can trigger defense responses including cell death (PubMed:26163574).</text>
</comment>
<comment type="function">
    <text evidence="5">(Microbial infection) Possesses stronger binding affinity with XLP1, a truncated paralog of P.sojae XEG1 which has no enzyme activity. Is impaired in its inhibitor activity towards the P.sojae xyloglucanase XEG1 when hijacked by XLP1 binding.</text>
</comment>
<comment type="subunit">
    <text evidence="5">Interacts with the Phytophtora sojae xyloglucanase XEG1 and xyloglucanase-like XLP1 (PubMed:28082413). Possesses stronger binding affinity with XLP1, a truncated paralog of P.sojae XEG1 which has no enzyme activity (PubMed:28082413).</text>
</comment>
<comment type="subcellular location">
    <subcellularLocation>
        <location evidence="8">Secreted</location>
        <location evidence="8">Extracellular space</location>
        <location evidence="8">Apoplast</location>
    </subcellularLocation>
</comment>
<comment type="miscellaneous">
    <text evidence="5">Plants silencing GIP1 display significantly increased susceptibility to infection by Phytophtora sojae, and plants over-expressing GIP1 show increased resistance.</text>
</comment>
<comment type="similarity">
    <text evidence="3 7">Belongs to the peptidase A1 family.</text>
</comment>
<comment type="online information" name="Protein Spotlight">
    <link uri="https://www.proteinspotlight.org/back_issues/218/"/>
    <text>Lure - Issue 218 of October 2019</text>
</comment>
<dbReference type="EC" id="3.4.23.-" evidence="7"/>
<dbReference type="EMBL" id="CM000836">
    <property type="protein sequence ID" value="KRH67173.1"/>
    <property type="molecule type" value="Genomic_DNA"/>
</dbReference>
<dbReference type="RefSeq" id="NP_001362789.1">
    <property type="nucleotide sequence ID" value="NM_001375860.1"/>
</dbReference>
<dbReference type="RefSeq" id="XP_003520561.1">
    <property type="nucleotide sequence ID" value="XM_003520513.3"/>
</dbReference>
<dbReference type="SMR" id="I1JNS6"/>
<dbReference type="STRING" id="3847.I1JNS6"/>
<dbReference type="GlyCosmos" id="I1JNS6">
    <property type="glycosylation" value="6 sites, No reported glycans"/>
</dbReference>
<dbReference type="PaxDb" id="3847-GLYMA03G30860.1"/>
<dbReference type="EnsemblPlants" id="KRH67173">
    <property type="protein sequence ID" value="KRH67173"/>
    <property type="gene ID" value="GLYMA_03G151900"/>
</dbReference>
<dbReference type="GeneID" id="100800584"/>
<dbReference type="Gramene" id="KRH67173">
    <property type="protein sequence ID" value="KRH67173"/>
    <property type="gene ID" value="GLYMA_03G151900"/>
</dbReference>
<dbReference type="eggNOG" id="KOG1339">
    <property type="taxonomic scope" value="Eukaryota"/>
</dbReference>
<dbReference type="HOGENOM" id="CLU_032185_0_0_1"/>
<dbReference type="InParanoid" id="I1JNS6"/>
<dbReference type="OMA" id="TYQHIPC"/>
<dbReference type="OrthoDB" id="1904546at2759"/>
<dbReference type="Proteomes" id="UP000008827">
    <property type="component" value="Chromosome 3"/>
</dbReference>
<dbReference type="GO" id="GO:0048046">
    <property type="term" value="C:apoplast"/>
    <property type="evidence" value="ECO:0007669"/>
    <property type="project" value="UniProtKB-SubCell"/>
</dbReference>
<dbReference type="GO" id="GO:0004190">
    <property type="term" value="F:aspartic-type endopeptidase activity"/>
    <property type="evidence" value="ECO:0007669"/>
    <property type="project" value="UniProtKB-KW"/>
</dbReference>
<dbReference type="GO" id="GO:0006952">
    <property type="term" value="P:defense response"/>
    <property type="evidence" value="ECO:0007669"/>
    <property type="project" value="UniProtKB-KW"/>
</dbReference>
<dbReference type="GO" id="GO:0006508">
    <property type="term" value="P:proteolysis"/>
    <property type="evidence" value="ECO:0007669"/>
    <property type="project" value="UniProtKB-KW"/>
</dbReference>
<dbReference type="FunFam" id="2.40.70.10:FF:000041">
    <property type="entry name" value="Basic 7S globulin"/>
    <property type="match status" value="1"/>
</dbReference>
<dbReference type="Gene3D" id="2.40.70.10">
    <property type="entry name" value="Acid Proteases"/>
    <property type="match status" value="2"/>
</dbReference>
<dbReference type="InterPro" id="IPR001461">
    <property type="entry name" value="Aspartic_peptidase_A1"/>
</dbReference>
<dbReference type="InterPro" id="IPR033121">
    <property type="entry name" value="PEPTIDASE_A1"/>
</dbReference>
<dbReference type="InterPro" id="IPR021109">
    <property type="entry name" value="Peptidase_aspartic_dom_sf"/>
</dbReference>
<dbReference type="InterPro" id="IPR032799">
    <property type="entry name" value="TAXi_C"/>
</dbReference>
<dbReference type="InterPro" id="IPR032861">
    <property type="entry name" value="TAXi_N"/>
</dbReference>
<dbReference type="PANTHER" id="PTHR47965:SF6">
    <property type="entry name" value="ASPARTIC PROTEINASE GIP1-RELATED"/>
    <property type="match status" value="1"/>
</dbReference>
<dbReference type="PANTHER" id="PTHR47965">
    <property type="entry name" value="ASPARTYL PROTEASE-RELATED"/>
    <property type="match status" value="1"/>
</dbReference>
<dbReference type="Pfam" id="PF14541">
    <property type="entry name" value="TAXi_C"/>
    <property type="match status" value="1"/>
</dbReference>
<dbReference type="Pfam" id="PF14543">
    <property type="entry name" value="TAXi_N"/>
    <property type="match status" value="1"/>
</dbReference>
<dbReference type="SUPFAM" id="SSF50630">
    <property type="entry name" value="Acid proteases"/>
    <property type="match status" value="1"/>
</dbReference>
<dbReference type="PROSITE" id="PS51767">
    <property type="entry name" value="PEPTIDASE_A1"/>
    <property type="match status" value="1"/>
</dbReference>
<sequence>MPPPLPSLCNFNLAILFLFLTPTFQIPLIAPISKDDTTQLYTLSVFLKTPLQPTKLHLHLGSSLSWVLCDSTYTSSSSHHIPCNTPLCNSFPSNACSNNSSLCALFPENPVTRNTLLDTALIDSLALPTYDASSSLVLISDFIFSCATAHLLQGLAANALGLASLGRSNYSLPAQISTSLTSPRSFTLCLPASSANTGAAIFASTASSFLFSSKIDLTYTQLIVNPVADTVVTDNPQPSDEYFINLTSIKINGKPLYINSSILTVDQTGFGGTKISTAEPYTVLETSIYRLFVQRFVNESSAFNLTVTEAVEPFGVCYPAGDLTETRVGPAVPTVDLVMHSEDVFWRIFGGNSMVRVAKGGVDVWCLGFVDGGTRGRTPIVIGGHQLEDNLMQFDLDSNRFGFTSTLLLQDAKCSNLKVNNFANGIK</sequence>
<protein>
    <recommendedName>
        <fullName evidence="7">Probable aspartic proteinase GIP1</fullName>
        <ecNumber evidence="7">3.4.23.-</ecNumber>
    </recommendedName>
    <alternativeName>
        <fullName evidence="6">Glucanase inhibitor protein 1</fullName>
        <shortName evidence="6">GmGIP1</shortName>
    </alternativeName>
</protein>
<name>GIP1_SOYBN</name>
<keyword id="KW-0052">Apoplast</keyword>
<keyword id="KW-0064">Aspartyl protease</keyword>
<keyword id="KW-0325">Glycoprotein</keyword>
<keyword id="KW-0378">Hydrolase</keyword>
<keyword id="KW-0611">Plant defense</keyword>
<keyword id="KW-0645">Protease</keyword>
<keyword id="KW-1185">Reference proteome</keyword>
<keyword id="KW-0964">Secreted</keyword>
<keyword id="KW-0732">Signal</keyword>